<protein>
    <recommendedName>
        <fullName>Coatomer subunit delta</fullName>
    </recommendedName>
    <alternativeName>
        <fullName>Delta-coat protein</fullName>
        <shortName>Delta-COP</shortName>
    </alternativeName>
</protein>
<feature type="chain" id="PRO_0000285620" description="Coatomer subunit delta">
    <location>
        <begin position="1"/>
        <end position="527"/>
    </location>
</feature>
<feature type="domain" description="MHD" evidence="2">
    <location>
        <begin position="282"/>
        <end position="527"/>
    </location>
</feature>
<feature type="region of interest" description="Disordered" evidence="3">
    <location>
        <begin position="166"/>
        <end position="187"/>
    </location>
</feature>
<feature type="region of interest" description="Disordered" evidence="3">
    <location>
        <begin position="217"/>
        <end position="250"/>
    </location>
</feature>
<feature type="compositionally biased region" description="Basic and acidic residues" evidence="3">
    <location>
        <begin position="166"/>
        <end position="175"/>
    </location>
</feature>
<feature type="compositionally biased region" description="Low complexity" evidence="3">
    <location>
        <begin position="177"/>
        <end position="187"/>
    </location>
</feature>
<feature type="compositionally biased region" description="Low complexity" evidence="3">
    <location>
        <begin position="239"/>
        <end position="250"/>
    </location>
</feature>
<feature type="sequence conflict" description="In Ref. 3; AAK96849." evidence="4" ref="3">
    <original>Q</original>
    <variation>H</variation>
    <location>
        <position position="518"/>
    </location>
</feature>
<name>COPD_ARATH</name>
<comment type="function">
    <text evidence="1">The coatomer is a cytosolic protein complex that binds to dilysine motifs and reversibly associates with Golgi non-clathrin-coated vesicles, which further mediate biosynthetic protein transport from the ER, via the Golgi up to the trans Golgi network. Coatomer complex is required for budding from Golgi membranes, and is essential for the retrograde Golgi-to-ER transport of dilysine-tagged proteins (By similarity).</text>
</comment>
<comment type="subunit">
    <text evidence="1">Oligomeric complex that consists of at least the alpha, beta, beta', gamma, delta, epsilon and zeta subunits.</text>
</comment>
<comment type="subcellular location">
    <subcellularLocation>
        <location evidence="1">Cytoplasm</location>
    </subcellularLocation>
    <subcellularLocation>
        <location evidence="1">Golgi apparatus membrane</location>
        <topology evidence="1">Peripheral membrane protein</topology>
        <orientation evidence="1">Cytoplasmic side</orientation>
    </subcellularLocation>
    <subcellularLocation>
        <location evidence="1">Cytoplasmic vesicle</location>
        <location evidence="1">COPI-coated vesicle membrane</location>
        <topology evidence="1">Peripheral membrane protein</topology>
        <orientation evidence="1">Cytoplasmic side</orientation>
    </subcellularLocation>
    <text evidence="1">The coatomer is cytoplasmic or polymerized on the cytoplasmic side of the Golgi, as well as on the vesicles/buds originating from it.</text>
</comment>
<comment type="similarity">
    <text evidence="4">Belongs to the adaptor complexes medium subunit family. Delta-COP subfamily.</text>
</comment>
<comment type="sequence caution" evidence="4">
    <conflict type="erroneous gene model prediction">
        <sequence resource="EMBL-CDS" id="BAB11523"/>
    </conflict>
</comment>
<keyword id="KW-0963">Cytoplasm</keyword>
<keyword id="KW-0968">Cytoplasmic vesicle</keyword>
<keyword id="KW-0931">ER-Golgi transport</keyword>
<keyword id="KW-0333">Golgi apparatus</keyword>
<keyword id="KW-0472">Membrane</keyword>
<keyword id="KW-0653">Protein transport</keyword>
<keyword id="KW-1185">Reference proteome</keyword>
<keyword id="KW-0813">Transport</keyword>
<evidence type="ECO:0000250" key="1"/>
<evidence type="ECO:0000255" key="2">
    <source>
        <dbReference type="PROSITE-ProRule" id="PRU00404"/>
    </source>
</evidence>
<evidence type="ECO:0000256" key="3">
    <source>
        <dbReference type="SAM" id="MobiDB-lite"/>
    </source>
</evidence>
<evidence type="ECO:0000305" key="4"/>
<reference key="1">
    <citation type="journal article" date="1997" name="DNA Res.">
        <title>Structural analysis of Arabidopsis thaliana chromosome 5. I. Sequence features of the 1.6 Mb regions covered by twenty physically assigned P1 clones.</title>
        <authorList>
            <person name="Sato S."/>
            <person name="Kotani H."/>
            <person name="Nakamura Y."/>
            <person name="Kaneko T."/>
            <person name="Asamizu E."/>
            <person name="Fukami M."/>
            <person name="Miyajima N."/>
            <person name="Tabata S."/>
        </authorList>
    </citation>
    <scope>NUCLEOTIDE SEQUENCE [LARGE SCALE GENOMIC DNA]</scope>
    <source>
        <strain>cv. Columbia</strain>
    </source>
</reference>
<reference key="2">
    <citation type="journal article" date="2017" name="Plant J.">
        <title>Araport11: a complete reannotation of the Arabidopsis thaliana reference genome.</title>
        <authorList>
            <person name="Cheng C.Y."/>
            <person name="Krishnakumar V."/>
            <person name="Chan A.P."/>
            <person name="Thibaud-Nissen F."/>
            <person name="Schobel S."/>
            <person name="Town C.D."/>
        </authorList>
    </citation>
    <scope>GENOME REANNOTATION</scope>
    <source>
        <strain>cv. Columbia</strain>
    </source>
</reference>
<reference key="3">
    <citation type="journal article" date="2003" name="Science">
        <title>Empirical analysis of transcriptional activity in the Arabidopsis genome.</title>
        <authorList>
            <person name="Yamada K."/>
            <person name="Lim J."/>
            <person name="Dale J.M."/>
            <person name="Chen H."/>
            <person name="Shinn P."/>
            <person name="Palm C.J."/>
            <person name="Southwick A.M."/>
            <person name="Wu H.C."/>
            <person name="Kim C.J."/>
            <person name="Nguyen M."/>
            <person name="Pham P.K."/>
            <person name="Cheuk R.F."/>
            <person name="Karlin-Newmann G."/>
            <person name="Liu S.X."/>
            <person name="Lam B."/>
            <person name="Sakano H."/>
            <person name="Wu T."/>
            <person name="Yu G."/>
            <person name="Miranda M."/>
            <person name="Quach H.L."/>
            <person name="Tripp M."/>
            <person name="Chang C.H."/>
            <person name="Lee J.M."/>
            <person name="Toriumi M.J."/>
            <person name="Chan M.M."/>
            <person name="Tang C.C."/>
            <person name="Onodera C.S."/>
            <person name="Deng J.M."/>
            <person name="Akiyama K."/>
            <person name="Ansari Y."/>
            <person name="Arakawa T."/>
            <person name="Banh J."/>
            <person name="Banno F."/>
            <person name="Bowser L."/>
            <person name="Brooks S.Y."/>
            <person name="Carninci P."/>
            <person name="Chao Q."/>
            <person name="Choy N."/>
            <person name="Enju A."/>
            <person name="Goldsmith A.D."/>
            <person name="Gurjal M."/>
            <person name="Hansen N.F."/>
            <person name="Hayashizaki Y."/>
            <person name="Johnson-Hopson C."/>
            <person name="Hsuan V.W."/>
            <person name="Iida K."/>
            <person name="Karnes M."/>
            <person name="Khan S."/>
            <person name="Koesema E."/>
            <person name="Ishida J."/>
            <person name="Jiang P.X."/>
            <person name="Jones T."/>
            <person name="Kawai J."/>
            <person name="Kamiya A."/>
            <person name="Meyers C."/>
            <person name="Nakajima M."/>
            <person name="Narusaka M."/>
            <person name="Seki M."/>
            <person name="Sakurai T."/>
            <person name="Satou M."/>
            <person name="Tamse R."/>
            <person name="Vaysberg M."/>
            <person name="Wallender E.K."/>
            <person name="Wong C."/>
            <person name="Yamamura Y."/>
            <person name="Yuan S."/>
            <person name="Shinozaki K."/>
            <person name="Davis R.W."/>
            <person name="Theologis A."/>
            <person name="Ecker J.R."/>
        </authorList>
    </citation>
    <scope>NUCLEOTIDE SEQUENCE [LARGE SCALE MRNA]</scope>
    <source>
        <strain>cv. Columbia</strain>
    </source>
</reference>
<reference key="4">
    <citation type="submission" date="2005-03" db="EMBL/GenBank/DDBJ databases">
        <title>Large-scale analysis of RIKEN Arabidopsis full-length (RAFL) cDNAs.</title>
        <authorList>
            <person name="Totoki Y."/>
            <person name="Seki M."/>
            <person name="Ishida J."/>
            <person name="Nakajima M."/>
            <person name="Enju A."/>
            <person name="Kamiya A."/>
            <person name="Narusaka M."/>
            <person name="Shin-i T."/>
            <person name="Nakagawa M."/>
            <person name="Sakamoto N."/>
            <person name="Oishi K."/>
            <person name="Kohara Y."/>
            <person name="Kobayashi M."/>
            <person name="Toyoda A."/>
            <person name="Sakaki Y."/>
            <person name="Sakurai T."/>
            <person name="Iida K."/>
            <person name="Akiyama K."/>
            <person name="Satou M."/>
            <person name="Toyoda T."/>
            <person name="Konagaya A."/>
            <person name="Carninci P."/>
            <person name="Kawai J."/>
            <person name="Hayashizaki Y."/>
            <person name="Shinozaki K."/>
        </authorList>
    </citation>
    <scope>NUCLEOTIDE SEQUENCE [LARGE SCALE MRNA] OF 268-527</scope>
    <source>
        <strain>cv. Columbia</strain>
    </source>
</reference>
<reference key="5">
    <citation type="journal article" date="2009" name="Plant Physiol.">
        <title>Large-scale Arabidopsis phosphoproteome profiling reveals novel chloroplast kinase substrates and phosphorylation networks.</title>
        <authorList>
            <person name="Reiland S."/>
            <person name="Messerli G."/>
            <person name="Baerenfaller K."/>
            <person name="Gerrits B."/>
            <person name="Endler A."/>
            <person name="Grossmann J."/>
            <person name="Gruissem W."/>
            <person name="Baginsky S."/>
        </authorList>
    </citation>
    <scope>IDENTIFICATION BY MASS SPECTROMETRY [LARGE SCALE ANALYSIS]</scope>
</reference>
<sequence>MVVLAAAIVVKSGKVIVSRHYVDMSRIRIEGLLAAFPKLVGMGKQHTYIETENVRYVYQPIEALFLLLVTTKQSNILEDLATLTLLSKLVPEYSMSLDEEGISRASFELIFAFDEVISLGHKESVTVAQVKQYCEMESHEEKLHKLVMQSKINDTKDVMKRKANEIDKSKIEKNKPGGFSSMGSMGSGRLESGFNELSISSGGGGGYGSGSGFGMISDVDPINTKPKDRSRSSVTAPPKSSGMKLGKSGKNQLMESLKAEGEDVIEDVKPTGQSKAAAPPPTDPFTLTVEEKLNVALRRDGGLSSFDMQGTLSLQILNQEDGFVQVQIATGENPEILFKTHPNINRDMFNNENILGLKRPDQPFPTGQGGDGVGLLRWRMQRADESMVPLTINCWPSVSGNETYVSLEYEASSMFDLTNVIISVPLPALREAPSVRQCDGEWRYDPRNSVLEWSILLIDNSNRSGSMEFVVPPVDSSVFFPISVQFAATSTYSGLKVTGMIPLRGGGGATPRFVQRTQLIAQNYQVI</sequence>
<accession>Q93Y22</accession>
<accession>Q56WY5</accession>
<accession>Q93Y42</accession>
<accession>Q9FF73</accession>
<dbReference type="EMBL" id="AB005245">
    <property type="protein sequence ID" value="BAB11523.1"/>
    <property type="status" value="ALT_SEQ"/>
    <property type="molecule type" value="Genomic_DNA"/>
</dbReference>
<dbReference type="EMBL" id="CP002688">
    <property type="protein sequence ID" value="AED90817.1"/>
    <property type="molecule type" value="Genomic_DNA"/>
</dbReference>
<dbReference type="EMBL" id="CP002688">
    <property type="protein sequence ID" value="AED90818.1"/>
    <property type="molecule type" value="Genomic_DNA"/>
</dbReference>
<dbReference type="EMBL" id="AY054464">
    <property type="protein sequence ID" value="AAK96656.1"/>
    <property type="molecule type" value="mRNA"/>
</dbReference>
<dbReference type="EMBL" id="AY054658">
    <property type="protein sequence ID" value="AAK96849.1"/>
    <property type="molecule type" value="mRNA"/>
</dbReference>
<dbReference type="EMBL" id="AY114626">
    <property type="protein sequence ID" value="AAM47945.1"/>
    <property type="molecule type" value="mRNA"/>
</dbReference>
<dbReference type="EMBL" id="AK221894">
    <property type="protein sequence ID" value="BAD94247.1"/>
    <property type="molecule type" value="mRNA"/>
</dbReference>
<dbReference type="RefSeq" id="NP_001031836.1">
    <property type="nucleotide sequence ID" value="NM_001036759.2"/>
</dbReference>
<dbReference type="RefSeq" id="NP_568147.1">
    <property type="nucleotide sequence ID" value="NM_120583.6"/>
</dbReference>
<dbReference type="SMR" id="Q93Y22"/>
<dbReference type="BioGRID" id="15662">
    <property type="interactions" value="6"/>
</dbReference>
<dbReference type="FunCoup" id="Q93Y22">
    <property type="interactions" value="5337"/>
</dbReference>
<dbReference type="STRING" id="3702.Q93Y22"/>
<dbReference type="GlyGen" id="Q93Y22">
    <property type="glycosylation" value="1 site"/>
</dbReference>
<dbReference type="iPTMnet" id="Q93Y22"/>
<dbReference type="SwissPalm" id="Q93Y22"/>
<dbReference type="PaxDb" id="3702-AT5G05010.1"/>
<dbReference type="ProteomicsDB" id="240950"/>
<dbReference type="EnsemblPlants" id="AT5G05010.1">
    <property type="protein sequence ID" value="AT5G05010.1"/>
    <property type="gene ID" value="AT5G05010"/>
</dbReference>
<dbReference type="EnsemblPlants" id="AT5G05010.2">
    <property type="protein sequence ID" value="AT5G05010.2"/>
    <property type="gene ID" value="AT5G05010"/>
</dbReference>
<dbReference type="GeneID" id="830383"/>
<dbReference type="Gramene" id="AT5G05010.1">
    <property type="protein sequence ID" value="AT5G05010.1"/>
    <property type="gene ID" value="AT5G05010"/>
</dbReference>
<dbReference type="Gramene" id="AT5G05010.2">
    <property type="protein sequence ID" value="AT5G05010.2"/>
    <property type="gene ID" value="AT5G05010"/>
</dbReference>
<dbReference type="KEGG" id="ath:AT5G05010"/>
<dbReference type="Araport" id="AT5G05010"/>
<dbReference type="TAIR" id="AT5G05010"/>
<dbReference type="eggNOG" id="KOG2635">
    <property type="taxonomic scope" value="Eukaryota"/>
</dbReference>
<dbReference type="HOGENOM" id="CLU_019988_1_0_1"/>
<dbReference type="InParanoid" id="Q93Y22"/>
<dbReference type="OMA" id="VQFRTHP"/>
<dbReference type="PhylomeDB" id="Q93Y22"/>
<dbReference type="CD-CODE" id="4299E36E">
    <property type="entry name" value="Nucleolus"/>
</dbReference>
<dbReference type="PRO" id="PR:Q93Y22"/>
<dbReference type="Proteomes" id="UP000006548">
    <property type="component" value="Chromosome 5"/>
</dbReference>
<dbReference type="ExpressionAtlas" id="Q93Y22">
    <property type="expression patterns" value="baseline and differential"/>
</dbReference>
<dbReference type="GO" id="GO:0030126">
    <property type="term" value="C:COPI vesicle coat"/>
    <property type="evidence" value="ECO:0007669"/>
    <property type="project" value="InterPro"/>
</dbReference>
<dbReference type="GO" id="GO:0000139">
    <property type="term" value="C:Golgi membrane"/>
    <property type="evidence" value="ECO:0007669"/>
    <property type="project" value="UniProtKB-SubCell"/>
</dbReference>
<dbReference type="GO" id="GO:0005886">
    <property type="term" value="C:plasma membrane"/>
    <property type="evidence" value="ECO:0007005"/>
    <property type="project" value="TAIR"/>
</dbReference>
<dbReference type="GO" id="GO:0009506">
    <property type="term" value="C:plasmodesma"/>
    <property type="evidence" value="ECO:0007005"/>
    <property type="project" value="TAIR"/>
</dbReference>
<dbReference type="GO" id="GO:0015031">
    <property type="term" value="P:protein transport"/>
    <property type="evidence" value="ECO:0007669"/>
    <property type="project" value="UniProtKB-KW"/>
</dbReference>
<dbReference type="GO" id="GO:0006890">
    <property type="term" value="P:retrograde vesicle-mediated transport, Golgi to endoplasmic reticulum"/>
    <property type="evidence" value="ECO:0007669"/>
    <property type="project" value="InterPro"/>
</dbReference>
<dbReference type="CDD" id="cd09254">
    <property type="entry name" value="AP_delta-COPI_MHD"/>
    <property type="match status" value="1"/>
</dbReference>
<dbReference type="CDD" id="cd14830">
    <property type="entry name" value="Delta_COP_N"/>
    <property type="match status" value="1"/>
</dbReference>
<dbReference type="FunFam" id="2.60.40.1170:FF:000007">
    <property type="entry name" value="Coatomer subunit delta"/>
    <property type="match status" value="1"/>
</dbReference>
<dbReference type="FunFam" id="2.60.40.1170:FF:000015">
    <property type="entry name" value="Coatomer subunit delta"/>
    <property type="match status" value="1"/>
</dbReference>
<dbReference type="FunFam" id="3.30.450.60:FF:000003">
    <property type="entry name" value="Coatomer subunit delta"/>
    <property type="match status" value="1"/>
</dbReference>
<dbReference type="Gene3D" id="3.30.450.60">
    <property type="match status" value="1"/>
</dbReference>
<dbReference type="Gene3D" id="2.60.40.1170">
    <property type="entry name" value="Mu homology domain, subdomain B"/>
    <property type="match status" value="2"/>
</dbReference>
<dbReference type="InterPro" id="IPR036168">
    <property type="entry name" value="AP2_Mu_C_sf"/>
</dbReference>
<dbReference type="InterPro" id="IPR027059">
    <property type="entry name" value="Coatomer_dsu"/>
</dbReference>
<dbReference type="InterPro" id="IPR011012">
    <property type="entry name" value="Longin-like_dom_sf"/>
</dbReference>
<dbReference type="InterPro" id="IPR028565">
    <property type="entry name" value="MHD"/>
</dbReference>
<dbReference type="PANTHER" id="PTHR10121">
    <property type="entry name" value="COATOMER SUBUNIT DELTA"/>
    <property type="match status" value="1"/>
</dbReference>
<dbReference type="PANTHER" id="PTHR10121:SF0">
    <property type="entry name" value="COATOMER SUBUNIT DELTA"/>
    <property type="match status" value="1"/>
</dbReference>
<dbReference type="Pfam" id="PF00928">
    <property type="entry name" value="Adap_comp_sub"/>
    <property type="match status" value="1"/>
</dbReference>
<dbReference type="SUPFAM" id="SSF49447">
    <property type="entry name" value="Second domain of Mu2 adaptin subunit (ap50) of ap2 adaptor"/>
    <property type="match status" value="1"/>
</dbReference>
<dbReference type="SUPFAM" id="SSF64356">
    <property type="entry name" value="SNARE-like"/>
    <property type="match status" value="1"/>
</dbReference>
<dbReference type="PROSITE" id="PS51072">
    <property type="entry name" value="MHD"/>
    <property type="match status" value="1"/>
</dbReference>
<organism>
    <name type="scientific">Arabidopsis thaliana</name>
    <name type="common">Mouse-ear cress</name>
    <dbReference type="NCBI Taxonomy" id="3702"/>
    <lineage>
        <taxon>Eukaryota</taxon>
        <taxon>Viridiplantae</taxon>
        <taxon>Streptophyta</taxon>
        <taxon>Embryophyta</taxon>
        <taxon>Tracheophyta</taxon>
        <taxon>Spermatophyta</taxon>
        <taxon>Magnoliopsida</taxon>
        <taxon>eudicotyledons</taxon>
        <taxon>Gunneridae</taxon>
        <taxon>Pentapetalae</taxon>
        <taxon>rosids</taxon>
        <taxon>malvids</taxon>
        <taxon>Brassicales</taxon>
        <taxon>Brassicaceae</taxon>
        <taxon>Camelineae</taxon>
        <taxon>Arabidopsis</taxon>
    </lineage>
</organism>
<gene>
    <name type="ordered locus">At5g05010</name>
    <name type="ORF">MUG13.13</name>
</gene>
<proteinExistence type="evidence at protein level"/>